<evidence type="ECO:0000255" key="1">
    <source>
        <dbReference type="HAMAP-Rule" id="MF_00473"/>
    </source>
</evidence>
<organism>
    <name type="scientific">Novosphingobium aromaticivorans (strain ATCC 700278 / DSM 12444 / CCUG 56034 / CIP 105152 / NBRC 16084 / F199)</name>
    <dbReference type="NCBI Taxonomy" id="279238"/>
    <lineage>
        <taxon>Bacteria</taxon>
        <taxon>Pseudomonadati</taxon>
        <taxon>Pseudomonadota</taxon>
        <taxon>Alphaproteobacteria</taxon>
        <taxon>Sphingomonadales</taxon>
        <taxon>Sphingomonadaceae</taxon>
        <taxon>Novosphingobium</taxon>
    </lineage>
</organism>
<proteinExistence type="inferred from homology"/>
<feature type="chain" id="PRO_0000252632" description="Glucose-6-phosphate isomerase">
    <location>
        <begin position="1"/>
        <end position="507"/>
    </location>
</feature>
<feature type="active site" description="Proton donor" evidence="1">
    <location>
        <position position="337"/>
    </location>
</feature>
<feature type="active site" evidence="1">
    <location>
        <position position="368"/>
    </location>
</feature>
<feature type="active site" evidence="1">
    <location>
        <position position="478"/>
    </location>
</feature>
<sequence length="507" mass="53414">MTVAEAETYWTALAGLPRPTLKELFSDAGRLDRYAATLDLPGGPIRFDWSKTHLSAEVEAVFAALASAMDFEGRRAALIEGAKINNTEGRAAEHTAQRGIGNEASVEEAEALHARMRMLVDAIHAGALGEVRSLIHIGIGGSALGPALAIDALTRDGAKVAVHVVSNIDGCALEAAMKACDPATTMIAVASKTFTTTETMTNAASALEWLRENGVADPYGQVVALTAAPEKAVEWGVDETRVLPFSETVGGRYSLWSSIGFPVAMALGWEGFAAFLDGAAAIDRHFIDADLAGNVVVRAAFADLYYTQVRGCQTRAVFAYDERLALLPDYLQQLEMESNGKRVLADGSPLTRPSAPVTWGGVGTDAQHAVFQLLHQGTHLIPVDFLAVKTQGHDLDPAHHQILLSNCFAQGAALMAGKASDDGARAYPGDRPSATILCDDLNPATLGALIAFHEHRTFVSAVMLGINPFDQFGVELGKAIAKQIESGGGEGFDPSTEALLAAVGLAG</sequence>
<reference key="1">
    <citation type="submission" date="2006-01" db="EMBL/GenBank/DDBJ databases">
        <title>Complete sequence of Novosphingobium aromaticivorans DSM 12444.</title>
        <authorList>
            <consortium name="US DOE Joint Genome Institute"/>
            <person name="Copeland A."/>
            <person name="Lucas S."/>
            <person name="Lapidus A."/>
            <person name="Barry K."/>
            <person name="Detter J.C."/>
            <person name="Glavina T."/>
            <person name="Hammon N."/>
            <person name="Israni S."/>
            <person name="Pitluck S."/>
            <person name="Chain P."/>
            <person name="Malfatti S."/>
            <person name="Shin M."/>
            <person name="Vergez L."/>
            <person name="Schmutz J."/>
            <person name="Larimer F."/>
            <person name="Land M."/>
            <person name="Kyrpides N."/>
            <person name="Ivanova N."/>
            <person name="Fredrickson J."/>
            <person name="Balkwill D."/>
            <person name="Romine M.F."/>
            <person name="Richardson P."/>
        </authorList>
    </citation>
    <scope>NUCLEOTIDE SEQUENCE [LARGE SCALE GENOMIC DNA]</scope>
    <source>
        <strain>ATCC 700278 / DSM 12444 / CCUG 56034 / CIP 105152 / NBRC 16084 / F199</strain>
    </source>
</reference>
<comment type="function">
    <text evidence="1">Catalyzes the reversible isomerization of glucose-6-phosphate to fructose-6-phosphate.</text>
</comment>
<comment type="catalytic activity">
    <reaction evidence="1">
        <text>alpha-D-glucose 6-phosphate = beta-D-fructose 6-phosphate</text>
        <dbReference type="Rhea" id="RHEA:11816"/>
        <dbReference type="ChEBI" id="CHEBI:57634"/>
        <dbReference type="ChEBI" id="CHEBI:58225"/>
        <dbReference type="EC" id="5.3.1.9"/>
    </reaction>
</comment>
<comment type="pathway">
    <text evidence="1">Carbohydrate biosynthesis; gluconeogenesis.</text>
</comment>
<comment type="pathway">
    <text evidence="1">Carbohydrate degradation; glycolysis; D-glyceraldehyde 3-phosphate and glycerone phosphate from D-glucose: step 2/4.</text>
</comment>
<comment type="subcellular location">
    <subcellularLocation>
        <location evidence="1">Cytoplasm</location>
    </subcellularLocation>
</comment>
<comment type="similarity">
    <text evidence="1">Belongs to the GPI family.</text>
</comment>
<keyword id="KW-0963">Cytoplasm</keyword>
<keyword id="KW-0312">Gluconeogenesis</keyword>
<keyword id="KW-0324">Glycolysis</keyword>
<keyword id="KW-0413">Isomerase</keyword>
<keyword id="KW-1185">Reference proteome</keyword>
<name>G6PI_NOVAD</name>
<accession>Q2G7C4</accession>
<protein>
    <recommendedName>
        <fullName evidence="1">Glucose-6-phosphate isomerase</fullName>
        <shortName evidence="1">GPI</shortName>
        <ecNumber evidence="1">5.3.1.9</ecNumber>
    </recommendedName>
    <alternativeName>
        <fullName evidence="1">Phosphoglucose isomerase</fullName>
        <shortName evidence="1">PGI</shortName>
    </alternativeName>
    <alternativeName>
        <fullName evidence="1">Phosphohexose isomerase</fullName>
        <shortName evidence="1">PHI</shortName>
    </alternativeName>
</protein>
<dbReference type="EC" id="5.3.1.9" evidence="1"/>
<dbReference type="EMBL" id="CP000248">
    <property type="protein sequence ID" value="ABD26249.1"/>
    <property type="molecule type" value="Genomic_DNA"/>
</dbReference>
<dbReference type="RefSeq" id="WP_011445459.1">
    <property type="nucleotide sequence ID" value="NC_007794.1"/>
</dbReference>
<dbReference type="SMR" id="Q2G7C4"/>
<dbReference type="STRING" id="279238.Saro_1809"/>
<dbReference type="KEGG" id="nar:Saro_1809"/>
<dbReference type="eggNOG" id="COG0166">
    <property type="taxonomic scope" value="Bacteria"/>
</dbReference>
<dbReference type="HOGENOM" id="CLU_017947_3_1_5"/>
<dbReference type="UniPathway" id="UPA00109">
    <property type="reaction ID" value="UER00181"/>
</dbReference>
<dbReference type="UniPathway" id="UPA00138"/>
<dbReference type="Proteomes" id="UP000009134">
    <property type="component" value="Chromosome"/>
</dbReference>
<dbReference type="GO" id="GO:0005829">
    <property type="term" value="C:cytosol"/>
    <property type="evidence" value="ECO:0007669"/>
    <property type="project" value="TreeGrafter"/>
</dbReference>
<dbReference type="GO" id="GO:0097367">
    <property type="term" value="F:carbohydrate derivative binding"/>
    <property type="evidence" value="ECO:0007669"/>
    <property type="project" value="InterPro"/>
</dbReference>
<dbReference type="GO" id="GO:0004347">
    <property type="term" value="F:glucose-6-phosphate isomerase activity"/>
    <property type="evidence" value="ECO:0007669"/>
    <property type="project" value="UniProtKB-UniRule"/>
</dbReference>
<dbReference type="GO" id="GO:0048029">
    <property type="term" value="F:monosaccharide binding"/>
    <property type="evidence" value="ECO:0007669"/>
    <property type="project" value="TreeGrafter"/>
</dbReference>
<dbReference type="GO" id="GO:0006094">
    <property type="term" value="P:gluconeogenesis"/>
    <property type="evidence" value="ECO:0007669"/>
    <property type="project" value="UniProtKB-UniRule"/>
</dbReference>
<dbReference type="GO" id="GO:0051156">
    <property type="term" value="P:glucose 6-phosphate metabolic process"/>
    <property type="evidence" value="ECO:0007669"/>
    <property type="project" value="TreeGrafter"/>
</dbReference>
<dbReference type="GO" id="GO:0006096">
    <property type="term" value="P:glycolytic process"/>
    <property type="evidence" value="ECO:0007669"/>
    <property type="project" value="UniProtKB-UniRule"/>
</dbReference>
<dbReference type="CDD" id="cd05015">
    <property type="entry name" value="SIS_PGI_1"/>
    <property type="match status" value="1"/>
</dbReference>
<dbReference type="CDD" id="cd05016">
    <property type="entry name" value="SIS_PGI_2"/>
    <property type="match status" value="1"/>
</dbReference>
<dbReference type="Gene3D" id="1.10.1390.10">
    <property type="match status" value="1"/>
</dbReference>
<dbReference type="Gene3D" id="3.40.50.10490">
    <property type="entry name" value="Glucose-6-phosphate isomerase like protein, domain 1"/>
    <property type="match status" value="2"/>
</dbReference>
<dbReference type="HAMAP" id="MF_00473">
    <property type="entry name" value="G6P_isomerase"/>
    <property type="match status" value="1"/>
</dbReference>
<dbReference type="InterPro" id="IPR001672">
    <property type="entry name" value="G6P_Isomerase"/>
</dbReference>
<dbReference type="InterPro" id="IPR023096">
    <property type="entry name" value="G6P_Isomerase_C"/>
</dbReference>
<dbReference type="InterPro" id="IPR018189">
    <property type="entry name" value="Phosphoglucose_isomerase_CS"/>
</dbReference>
<dbReference type="InterPro" id="IPR046348">
    <property type="entry name" value="SIS_dom_sf"/>
</dbReference>
<dbReference type="InterPro" id="IPR035476">
    <property type="entry name" value="SIS_PGI_1"/>
</dbReference>
<dbReference type="InterPro" id="IPR035482">
    <property type="entry name" value="SIS_PGI_2"/>
</dbReference>
<dbReference type="NCBIfam" id="NF001211">
    <property type="entry name" value="PRK00179.1"/>
    <property type="match status" value="1"/>
</dbReference>
<dbReference type="PANTHER" id="PTHR11469">
    <property type="entry name" value="GLUCOSE-6-PHOSPHATE ISOMERASE"/>
    <property type="match status" value="1"/>
</dbReference>
<dbReference type="PANTHER" id="PTHR11469:SF1">
    <property type="entry name" value="GLUCOSE-6-PHOSPHATE ISOMERASE"/>
    <property type="match status" value="1"/>
</dbReference>
<dbReference type="Pfam" id="PF00342">
    <property type="entry name" value="PGI"/>
    <property type="match status" value="1"/>
</dbReference>
<dbReference type="PRINTS" id="PR00662">
    <property type="entry name" value="G6PISOMERASE"/>
</dbReference>
<dbReference type="SUPFAM" id="SSF53697">
    <property type="entry name" value="SIS domain"/>
    <property type="match status" value="1"/>
</dbReference>
<dbReference type="PROSITE" id="PS00765">
    <property type="entry name" value="P_GLUCOSE_ISOMERASE_1"/>
    <property type="match status" value="1"/>
</dbReference>
<dbReference type="PROSITE" id="PS00174">
    <property type="entry name" value="P_GLUCOSE_ISOMERASE_2"/>
    <property type="match status" value="1"/>
</dbReference>
<dbReference type="PROSITE" id="PS51463">
    <property type="entry name" value="P_GLUCOSE_ISOMERASE_3"/>
    <property type="match status" value="1"/>
</dbReference>
<gene>
    <name evidence="1" type="primary">pgi</name>
    <name type="ordered locus">Saro_1809</name>
</gene>